<organism>
    <name type="scientific">Staphylococcus aureus (strain N315)</name>
    <dbReference type="NCBI Taxonomy" id="158879"/>
    <lineage>
        <taxon>Bacteria</taxon>
        <taxon>Bacillati</taxon>
        <taxon>Bacillota</taxon>
        <taxon>Bacilli</taxon>
        <taxon>Bacillales</taxon>
        <taxon>Staphylococcaceae</taxon>
        <taxon>Staphylococcus</taxon>
    </lineage>
</organism>
<evidence type="ECO:0000250" key="1"/>
<evidence type="ECO:0000250" key="2">
    <source>
        <dbReference type="UniProtKB" id="Q9X1H9"/>
    </source>
</evidence>
<evidence type="ECO:0000255" key="3">
    <source>
        <dbReference type="PROSITE-ProRule" id="PRU00815"/>
    </source>
</evidence>
<proteinExistence type="evidence at protein level"/>
<protein>
    <recommendedName>
        <fullName>DegV domain-containing protein SA1258</fullName>
    </recommendedName>
</protein>
<dbReference type="EMBL" id="BA000018">
    <property type="protein sequence ID" value="BAB42518.1"/>
    <property type="molecule type" value="Genomic_DNA"/>
</dbReference>
<dbReference type="PIR" id="A89920">
    <property type="entry name" value="A89920"/>
</dbReference>
<dbReference type="SMR" id="P67371"/>
<dbReference type="EnsemblBacteria" id="BAB42518">
    <property type="protein sequence ID" value="BAB42518"/>
    <property type="gene ID" value="BAB42518"/>
</dbReference>
<dbReference type="KEGG" id="sau:SA1258"/>
<dbReference type="HOGENOM" id="CLU_048251_3_2_9"/>
<dbReference type="GO" id="GO:0008289">
    <property type="term" value="F:lipid binding"/>
    <property type="evidence" value="ECO:0007669"/>
    <property type="project" value="UniProtKB-KW"/>
</dbReference>
<dbReference type="Gene3D" id="3.30.1180.10">
    <property type="match status" value="1"/>
</dbReference>
<dbReference type="Gene3D" id="3.40.50.10170">
    <property type="match status" value="1"/>
</dbReference>
<dbReference type="InterPro" id="IPR003797">
    <property type="entry name" value="DegV"/>
</dbReference>
<dbReference type="InterPro" id="IPR043168">
    <property type="entry name" value="DegV_C"/>
</dbReference>
<dbReference type="InterPro" id="IPR050270">
    <property type="entry name" value="DegV_domain_contain"/>
</dbReference>
<dbReference type="NCBIfam" id="TIGR00762">
    <property type="entry name" value="DegV"/>
    <property type="match status" value="1"/>
</dbReference>
<dbReference type="PANTHER" id="PTHR33434">
    <property type="entry name" value="DEGV DOMAIN-CONTAINING PROTEIN DR_1986-RELATED"/>
    <property type="match status" value="1"/>
</dbReference>
<dbReference type="PANTHER" id="PTHR33434:SF8">
    <property type="entry name" value="DEGV DOMAIN-CONTAINING PROTEIN SPR1019"/>
    <property type="match status" value="1"/>
</dbReference>
<dbReference type="Pfam" id="PF02645">
    <property type="entry name" value="DegV"/>
    <property type="match status" value="1"/>
</dbReference>
<dbReference type="SUPFAM" id="SSF82549">
    <property type="entry name" value="DAK1/DegV-like"/>
    <property type="match status" value="1"/>
</dbReference>
<dbReference type="PROSITE" id="PS51482">
    <property type="entry name" value="DEGV"/>
    <property type="match status" value="1"/>
</dbReference>
<accession>P67371</accession>
<accession>Q99U62</accession>
<feature type="chain" id="PRO_0000209789" description="DegV domain-containing protein SA1258">
    <location>
        <begin position="1"/>
        <end position="279"/>
    </location>
</feature>
<feature type="domain" description="DegV" evidence="3">
    <location>
        <begin position="4"/>
        <end position="278"/>
    </location>
</feature>
<feature type="binding site" evidence="2">
    <location>
        <position position="61"/>
    </location>
    <ligand>
        <name>hexadecanoate</name>
        <dbReference type="ChEBI" id="CHEBI:7896"/>
    </ligand>
</feature>
<feature type="binding site" evidence="2">
    <location>
        <position position="93"/>
    </location>
    <ligand>
        <name>hexadecanoate</name>
        <dbReference type="ChEBI" id="CHEBI:7896"/>
    </ligand>
</feature>
<sequence length="279" mass="30675">MTKQIIVTDSTSDLSKEYLEANNIHVIPLSLTIEGASYVDQVDITSEEFINHIENDEDVKTSQPAIGEFISAYEELGKDGSEIISIHLSSGLSGTYNTAYQASQMVDANVTVIDSKSISFSLGYQIQHLVELVKEGVSTSEIVKKLNHLRENIKLFVVIGQLNQLIKGGRISKTKGLIGNLMKIKPIGTLDDGRLELVHNARTQNSSIQYLKKEIAEFIGDHEIKSIGVAHANVIEYVDKLKKVFNEAFHVNNYDINVTTPVISAHTGQGAIGLVVLKK</sequence>
<keyword id="KW-0446">Lipid-binding</keyword>
<name>Y1258_STAAN</name>
<reference key="1">
    <citation type="journal article" date="2001" name="Lancet">
        <title>Whole genome sequencing of meticillin-resistant Staphylococcus aureus.</title>
        <authorList>
            <person name="Kuroda M."/>
            <person name="Ohta T."/>
            <person name="Uchiyama I."/>
            <person name="Baba T."/>
            <person name="Yuzawa H."/>
            <person name="Kobayashi I."/>
            <person name="Cui L."/>
            <person name="Oguchi A."/>
            <person name="Aoki K."/>
            <person name="Nagai Y."/>
            <person name="Lian J.-Q."/>
            <person name="Ito T."/>
            <person name="Kanamori M."/>
            <person name="Matsumaru H."/>
            <person name="Maruyama A."/>
            <person name="Murakami H."/>
            <person name="Hosoyama A."/>
            <person name="Mizutani-Ui Y."/>
            <person name="Takahashi N.K."/>
            <person name="Sawano T."/>
            <person name="Inoue R."/>
            <person name="Kaito C."/>
            <person name="Sekimizu K."/>
            <person name="Hirakawa H."/>
            <person name="Kuhara S."/>
            <person name="Goto S."/>
            <person name="Yabuzaki J."/>
            <person name="Kanehisa M."/>
            <person name="Yamashita A."/>
            <person name="Oshima K."/>
            <person name="Furuya K."/>
            <person name="Yoshino C."/>
            <person name="Shiba T."/>
            <person name="Hattori M."/>
            <person name="Ogasawara N."/>
            <person name="Hayashi H."/>
            <person name="Hiramatsu K."/>
        </authorList>
    </citation>
    <scope>NUCLEOTIDE SEQUENCE [LARGE SCALE GENOMIC DNA]</scope>
    <source>
        <strain>N315</strain>
    </source>
</reference>
<reference key="2">
    <citation type="submission" date="2007-10" db="UniProtKB">
        <title>Shotgun proteomic analysis of total and membrane protein extracts of S. aureus strain N315.</title>
        <authorList>
            <person name="Vaezzadeh A.R."/>
            <person name="Deshusses J."/>
            <person name="Lescuyer P."/>
            <person name="Hochstrasser D.F."/>
        </authorList>
    </citation>
    <scope>IDENTIFICATION BY MASS SPECTROMETRY [LARGE SCALE ANALYSIS]</scope>
    <source>
        <strain>N315</strain>
    </source>
</reference>
<comment type="function">
    <text evidence="1">May bind long-chain fatty acids, such as palmitate, and may play a role in lipid transport or fatty acid metabolism.</text>
</comment>
<gene>
    <name type="ordered locus">SA1258</name>
</gene>